<keyword id="KW-1003">Cell membrane</keyword>
<keyword id="KW-0903">Direct protein sequencing</keyword>
<keyword id="KW-0449">Lipoprotein</keyword>
<keyword id="KW-0472">Membrane</keyword>
<keyword id="KW-0488">Methylation</keyword>
<keyword id="KW-0588">Pheromone</keyword>
<keyword id="KW-0636">Prenylation</keyword>
<keyword id="KW-1185">Reference proteome</keyword>
<comment type="function">
    <text>The active factor is excreted into the culture medium by haploid cells of the A mating type and acts on cells of the opposite mating type (type alpha). It mediates the conjugation process between the two types by inhibiting the initiation of DNA synthesis in type alpha cells and synchronizing them with type A.</text>
</comment>
<comment type="subcellular location">
    <subcellularLocation>
        <location evidence="4">Cell membrane</location>
        <topology evidence="4">Lipid-anchor</topology>
        <orientation evidence="4">Cytoplasmic side</orientation>
    </subcellularLocation>
</comment>
<comment type="miscellaneous">
    <text evidence="1">Present with 28900 molecules/cell in log phase SD medium.</text>
</comment>
<feature type="propeptide" id="PRO_0000021690" evidence="3">
    <location>
        <begin position="1"/>
        <end position="21"/>
    </location>
</feature>
<feature type="peptide" id="PRO_0000021691" description="Mating hormone A-factor 1">
    <location>
        <begin position="22"/>
        <end position="33"/>
    </location>
</feature>
<feature type="propeptide" id="PRO_0000021692" description="Removed in mature form">
    <location>
        <begin position="34"/>
        <end position="36"/>
    </location>
</feature>
<feature type="modified residue" description="Cysteine methyl ester" evidence="2">
    <location>
        <position position="33"/>
    </location>
</feature>
<feature type="lipid moiety-binding region" description="S-farnesyl cysteine" evidence="2">
    <location>
        <position position="33"/>
    </location>
</feature>
<reference key="1">
    <citation type="book" date="1985" name="Protein transport and secretion">
        <title>Structure of genes encoding precursors of the yeast peptide mating pheromone a-factor.</title>
        <editorList>
            <person name="Gething M.-J."/>
        </editorList>
        <authorList>
            <person name="Brake A.J."/>
            <person name="Brenner C."/>
            <person name="Najarian R."/>
            <person name="Laybourn P."/>
            <person name="Merryweather J."/>
        </authorList>
    </citation>
    <scope>NUCLEOTIDE SEQUENCE [GENOMIC DNA]</scope>
</reference>
<reference key="2">
    <citation type="journal article" date="1988" name="Mol. Cell. Biol.">
        <title>The a-factor pheromone of Saccharomyces cerevisiae is essential for mating.</title>
        <authorList>
            <person name="Michaelis S."/>
            <person name="Herskowitz I."/>
        </authorList>
    </citation>
    <scope>NUCLEOTIDE SEQUENCE [GENOMIC DNA]</scope>
</reference>
<reference key="3">
    <citation type="journal article" date="1997" name="Nature">
        <title>The nucleotide sequence of Saccharomyces cerevisiae chromosome IV.</title>
        <authorList>
            <person name="Jacq C."/>
            <person name="Alt-Moerbe J."/>
            <person name="Andre B."/>
            <person name="Arnold W."/>
            <person name="Bahr A."/>
            <person name="Ballesta J.P.G."/>
            <person name="Bargues M."/>
            <person name="Baron L."/>
            <person name="Becker A."/>
            <person name="Biteau N."/>
            <person name="Bloecker H."/>
            <person name="Blugeon C."/>
            <person name="Boskovic J."/>
            <person name="Brandt P."/>
            <person name="Brueckner M."/>
            <person name="Buitrago M.J."/>
            <person name="Coster F."/>
            <person name="Delaveau T."/>
            <person name="del Rey F."/>
            <person name="Dujon B."/>
            <person name="Eide L.G."/>
            <person name="Garcia-Cantalejo J.M."/>
            <person name="Goffeau A."/>
            <person name="Gomez-Peris A."/>
            <person name="Granotier C."/>
            <person name="Hanemann V."/>
            <person name="Hankeln T."/>
            <person name="Hoheisel J.D."/>
            <person name="Jaeger W."/>
            <person name="Jimenez A."/>
            <person name="Jonniaux J.-L."/>
            <person name="Kraemer C."/>
            <person name="Kuester H."/>
            <person name="Laamanen P."/>
            <person name="Legros Y."/>
            <person name="Louis E.J."/>
            <person name="Moeller-Rieker S."/>
            <person name="Monnet A."/>
            <person name="Moro M."/>
            <person name="Mueller-Auer S."/>
            <person name="Nussbaumer B."/>
            <person name="Paricio N."/>
            <person name="Paulin L."/>
            <person name="Perea J."/>
            <person name="Perez-Alonso M."/>
            <person name="Perez-Ortin J.E."/>
            <person name="Pohl T.M."/>
            <person name="Prydz H."/>
            <person name="Purnelle B."/>
            <person name="Rasmussen S.W."/>
            <person name="Remacha M.A."/>
            <person name="Revuelta J.L."/>
            <person name="Rieger M."/>
            <person name="Salom D."/>
            <person name="Saluz H.P."/>
            <person name="Saiz J.E."/>
            <person name="Saren A.-M."/>
            <person name="Schaefer M."/>
            <person name="Scharfe M."/>
            <person name="Schmidt E.R."/>
            <person name="Schneider C."/>
            <person name="Scholler P."/>
            <person name="Schwarz S."/>
            <person name="Soler-Mira A."/>
            <person name="Urrestarazu L.A."/>
            <person name="Verhasselt P."/>
            <person name="Vissers S."/>
            <person name="Voet M."/>
            <person name="Volckaert G."/>
            <person name="Wagner G."/>
            <person name="Wambutt R."/>
            <person name="Wedler E."/>
            <person name="Wedler H."/>
            <person name="Woelfl S."/>
            <person name="Harris D.E."/>
            <person name="Bowman S."/>
            <person name="Brown D."/>
            <person name="Churcher C.M."/>
            <person name="Connor R."/>
            <person name="Dedman K."/>
            <person name="Gentles S."/>
            <person name="Hamlin N."/>
            <person name="Hunt S."/>
            <person name="Jones L."/>
            <person name="McDonald S."/>
            <person name="Murphy L.D."/>
            <person name="Niblett D."/>
            <person name="Odell C."/>
            <person name="Oliver K."/>
            <person name="Rajandream M.A."/>
            <person name="Richards C."/>
            <person name="Shore L."/>
            <person name="Walsh S.V."/>
            <person name="Barrell B.G."/>
            <person name="Dietrich F.S."/>
            <person name="Mulligan J.T."/>
            <person name="Allen E."/>
            <person name="Araujo R."/>
            <person name="Aviles E."/>
            <person name="Berno A."/>
            <person name="Carpenter J."/>
            <person name="Chen E."/>
            <person name="Cherry J.M."/>
            <person name="Chung E."/>
            <person name="Duncan M."/>
            <person name="Hunicke-Smith S."/>
            <person name="Hyman R.W."/>
            <person name="Komp C."/>
            <person name="Lashkari D."/>
            <person name="Lew H."/>
            <person name="Lin D."/>
            <person name="Mosedale D."/>
            <person name="Nakahara K."/>
            <person name="Namath A."/>
            <person name="Oefner P."/>
            <person name="Oh C."/>
            <person name="Petel F.X."/>
            <person name="Roberts D."/>
            <person name="Schramm S."/>
            <person name="Schroeder M."/>
            <person name="Shogren T."/>
            <person name="Shroff N."/>
            <person name="Winant A."/>
            <person name="Yelton M.A."/>
            <person name="Botstein D."/>
            <person name="Davis R.W."/>
            <person name="Johnston M."/>
            <person name="Andrews S."/>
            <person name="Brinkman R."/>
            <person name="Cooper J."/>
            <person name="Ding H."/>
            <person name="Du Z."/>
            <person name="Favello A."/>
            <person name="Fulton L."/>
            <person name="Gattung S."/>
            <person name="Greco T."/>
            <person name="Hallsworth K."/>
            <person name="Hawkins J."/>
            <person name="Hillier L.W."/>
            <person name="Jier M."/>
            <person name="Johnson D."/>
            <person name="Johnston L."/>
            <person name="Kirsten J."/>
            <person name="Kucaba T."/>
            <person name="Langston Y."/>
            <person name="Latreille P."/>
            <person name="Le T."/>
            <person name="Mardis E."/>
            <person name="Menezes S."/>
            <person name="Miller N."/>
            <person name="Nhan M."/>
            <person name="Pauley A."/>
            <person name="Peluso D."/>
            <person name="Rifkin L."/>
            <person name="Riles L."/>
            <person name="Taich A."/>
            <person name="Trevaskis E."/>
            <person name="Vignati D."/>
            <person name="Wilcox L."/>
            <person name="Wohldman P."/>
            <person name="Vaudin M."/>
            <person name="Wilson R."/>
            <person name="Waterston R."/>
            <person name="Albermann K."/>
            <person name="Hani J."/>
            <person name="Heumann K."/>
            <person name="Kleine K."/>
            <person name="Mewes H.-W."/>
            <person name="Zollner A."/>
            <person name="Zaccaria P."/>
        </authorList>
    </citation>
    <scope>NUCLEOTIDE SEQUENCE [LARGE SCALE GENOMIC DNA]</scope>
    <source>
        <strain>ATCC 204508 / S288c</strain>
    </source>
</reference>
<reference key="4">
    <citation type="journal article" date="2014" name="G3 (Bethesda)">
        <title>The reference genome sequence of Saccharomyces cerevisiae: Then and now.</title>
        <authorList>
            <person name="Engel S.R."/>
            <person name="Dietrich F.S."/>
            <person name="Fisk D.G."/>
            <person name="Binkley G."/>
            <person name="Balakrishnan R."/>
            <person name="Costanzo M.C."/>
            <person name="Dwight S.S."/>
            <person name="Hitz B.C."/>
            <person name="Karra K."/>
            <person name="Nash R.S."/>
            <person name="Weng S."/>
            <person name="Wong E.D."/>
            <person name="Lloyd P."/>
            <person name="Skrzypek M.S."/>
            <person name="Miyasato S.R."/>
            <person name="Simison M."/>
            <person name="Cherry J.M."/>
        </authorList>
    </citation>
    <scope>GENOME REANNOTATION</scope>
    <source>
        <strain>ATCC 204508 / S288c</strain>
    </source>
</reference>
<reference key="5">
    <citation type="journal article" date="2007" name="Genome Res.">
        <title>Approaching a complete repository of sequence-verified protein-encoding clones for Saccharomyces cerevisiae.</title>
        <authorList>
            <person name="Hu Y."/>
            <person name="Rolfs A."/>
            <person name="Bhullar B."/>
            <person name="Murthy T.V.S."/>
            <person name="Zhu C."/>
            <person name="Berger M.F."/>
            <person name="Camargo A.A."/>
            <person name="Kelley F."/>
            <person name="McCarron S."/>
            <person name="Jepson D."/>
            <person name="Richardson A."/>
            <person name="Raphael J."/>
            <person name="Moreira D."/>
            <person name="Taycher E."/>
            <person name="Zuo D."/>
            <person name="Mohr S."/>
            <person name="Kane M.F."/>
            <person name="Williamson J."/>
            <person name="Simpson A.J.G."/>
            <person name="Bulyk M.L."/>
            <person name="Harlow E."/>
            <person name="Marsischky G."/>
            <person name="Kolodner R.D."/>
            <person name="LaBaer J."/>
        </authorList>
    </citation>
    <scope>NUCLEOTIDE SEQUENCE [GENOMIC DNA]</scope>
    <source>
        <strain>ATCC 204508 / S288c</strain>
    </source>
</reference>
<reference key="6">
    <citation type="journal article" date="1987" name="J. Biol. Chem.">
        <title>Amino acid sequences of a-factor mating peptides from Saccharomyces cerevisiae.</title>
        <authorList>
            <person name="Betz R."/>
            <person name="Crabb J.W."/>
            <person name="Meyer H.E."/>
            <person name="Wittig R."/>
            <person name="Duntze W."/>
        </authorList>
    </citation>
    <scope>PROTEIN SEQUENCE OF 22-33</scope>
</reference>
<reference key="7">
    <citation type="journal article" date="1988" name="J. Biol. Chem.">
        <title>Structure of Saccharomyces cerevisiae mating hormone a-factor. Identification of S-farnesyl cysteine as a structural component.</title>
        <authorList>
            <person name="Anderegg R.J."/>
            <person name="Betz R."/>
            <person name="Carr S.A."/>
            <person name="Crabb J.W."/>
            <person name="Duntze W."/>
        </authorList>
    </citation>
    <scope>ISOPRENYLATION AT CYS-33</scope>
    <scope>METHYLATION AT CYS-33</scope>
    <scope>IDENTIFICATION BY MASS SPECTROMETRY</scope>
</reference>
<reference key="8">
    <citation type="journal article" date="2003" name="Nature">
        <title>Global analysis of protein expression in yeast.</title>
        <authorList>
            <person name="Ghaemmaghami S."/>
            <person name="Huh W.-K."/>
            <person name="Bower K."/>
            <person name="Howson R.W."/>
            <person name="Belle A."/>
            <person name="Dephoure N."/>
            <person name="O'Shea E.K."/>
            <person name="Weissman J.S."/>
        </authorList>
    </citation>
    <scope>LEVEL OF PROTEIN EXPRESSION [LARGE SCALE ANALYSIS]</scope>
</reference>
<reference key="9">
    <citation type="journal article" date="1991" name="Biochem. Biophys. Res. Commun.">
        <title>The conformation of a-factor is not influenced by the S-prenylation of Cys12.</title>
        <authorList>
            <person name="Gounarides J.S."/>
            <person name="Broido M.S."/>
            <person name="Xue C.-B."/>
            <person name="Becker J.M."/>
            <person name="Naider F.R."/>
        </authorList>
    </citation>
    <scope>STRUCTURE BY NMR</scope>
</reference>
<name>MFA1_YEAST</name>
<proteinExistence type="evidence at protein level"/>
<evidence type="ECO:0000269" key="1">
    <source>
    </source>
</evidence>
<evidence type="ECO:0000269" key="2">
    <source>
    </source>
</evidence>
<evidence type="ECO:0000269" key="3">
    <source>
    </source>
</evidence>
<evidence type="ECO:0000305" key="4"/>
<protein>
    <recommendedName>
        <fullName>Mating hormone A-factor 1</fullName>
    </recommendedName>
</protein>
<gene>
    <name type="primary">MFA1</name>
    <name type="ordered locus">YDR461W</name>
    <name type="ORF">D8035.5</name>
</gene>
<dbReference type="EMBL" id="U20817">
    <property type="protein sequence ID" value="AAA68601.1"/>
    <property type="molecule type" value="Genomic_DNA"/>
</dbReference>
<dbReference type="EMBL" id="U26203">
    <property type="protein sequence ID" value="AAA67687.1"/>
    <property type="molecule type" value="Genomic_DNA"/>
</dbReference>
<dbReference type="EMBL" id="U33050">
    <property type="protein sequence ID" value="AAB64920.1"/>
    <property type="molecule type" value="Genomic_DNA"/>
</dbReference>
<dbReference type="EMBL" id="AY557797">
    <property type="protein sequence ID" value="AAS56123.1"/>
    <property type="molecule type" value="Genomic_DNA"/>
</dbReference>
<dbReference type="EMBL" id="BK006938">
    <property type="protein sequence ID" value="DAA12295.1"/>
    <property type="molecule type" value="Genomic_DNA"/>
</dbReference>
<dbReference type="PIR" id="S59735">
    <property type="entry name" value="S59735"/>
</dbReference>
<dbReference type="RefSeq" id="NP_010749.3">
    <property type="nucleotide sequence ID" value="NM_001180769.3"/>
</dbReference>
<dbReference type="BioGRID" id="32515">
    <property type="interactions" value="21"/>
</dbReference>
<dbReference type="DIP" id="DIP-4646N"/>
<dbReference type="FunCoup" id="P34165">
    <property type="interactions" value="191"/>
</dbReference>
<dbReference type="IntAct" id="P34165">
    <property type="interactions" value="2"/>
</dbReference>
<dbReference type="STRING" id="4932.YDR461W"/>
<dbReference type="PaxDb" id="4932-YDR461W"/>
<dbReference type="PeptideAtlas" id="P34165"/>
<dbReference type="EnsemblFungi" id="YDR461W_mRNA">
    <property type="protein sequence ID" value="YDR461W"/>
    <property type="gene ID" value="YDR461W"/>
</dbReference>
<dbReference type="GeneID" id="852072"/>
<dbReference type="KEGG" id="sce:YDR461W"/>
<dbReference type="AGR" id="SGD:S000002869"/>
<dbReference type="SGD" id="S000002869">
    <property type="gene designation" value="MFA1"/>
</dbReference>
<dbReference type="VEuPathDB" id="FungiDB:YDR461W"/>
<dbReference type="GeneTree" id="ENSGT00940000180742"/>
<dbReference type="HOGENOM" id="CLU_220658_0_0_1"/>
<dbReference type="InParanoid" id="P34165"/>
<dbReference type="OrthoDB" id="4028313at2759"/>
<dbReference type="BioCyc" id="YEAST:G3O-29989-MONOMER"/>
<dbReference type="BioGRID-ORCS" id="852072">
    <property type="hits" value="0 hits in 10 CRISPR screens"/>
</dbReference>
<dbReference type="PRO" id="PR:P34165"/>
<dbReference type="Proteomes" id="UP000002311">
    <property type="component" value="Chromosome IV"/>
</dbReference>
<dbReference type="GO" id="GO:0005783">
    <property type="term" value="C:endoplasmic reticulum"/>
    <property type="evidence" value="ECO:0007005"/>
    <property type="project" value="SGD"/>
</dbReference>
<dbReference type="GO" id="GO:0005576">
    <property type="term" value="C:extracellular region"/>
    <property type="evidence" value="ECO:0000314"/>
    <property type="project" value="SGD"/>
</dbReference>
<dbReference type="GO" id="GO:0005886">
    <property type="term" value="C:plasma membrane"/>
    <property type="evidence" value="ECO:0007669"/>
    <property type="project" value="UniProtKB-SubCell"/>
</dbReference>
<dbReference type="GO" id="GO:0000772">
    <property type="term" value="F:mating pheromone activity"/>
    <property type="evidence" value="ECO:0000315"/>
    <property type="project" value="SGD"/>
</dbReference>
<dbReference type="GO" id="GO:0000750">
    <property type="term" value="P:pheromone-dependent signal transduction involved in conjugation with cellular fusion"/>
    <property type="evidence" value="ECO:0000315"/>
    <property type="project" value="SGD"/>
</dbReference>
<dbReference type="InterPro" id="IPR035296">
    <property type="entry name" value="Mfa1/2"/>
</dbReference>
<dbReference type="Pfam" id="PF17317">
    <property type="entry name" value="MFA1_2"/>
    <property type="match status" value="1"/>
</dbReference>
<sequence length="36" mass="3927">MQPSTATAAPKEKTSSEKKDNYIIKGVFWDPACVIA</sequence>
<accession>P34165</accession>
<accession>D6VT85</accession>
<organism>
    <name type="scientific">Saccharomyces cerevisiae (strain ATCC 204508 / S288c)</name>
    <name type="common">Baker's yeast</name>
    <dbReference type="NCBI Taxonomy" id="559292"/>
    <lineage>
        <taxon>Eukaryota</taxon>
        <taxon>Fungi</taxon>
        <taxon>Dikarya</taxon>
        <taxon>Ascomycota</taxon>
        <taxon>Saccharomycotina</taxon>
        <taxon>Saccharomycetes</taxon>
        <taxon>Saccharomycetales</taxon>
        <taxon>Saccharomycetaceae</taxon>
        <taxon>Saccharomyces</taxon>
    </lineage>
</organism>